<name>RBN_ECOL6</name>
<feature type="chain" id="PRO_0000155865" description="Ribonuclease BN">
    <location>
        <begin position="1"/>
        <end position="305"/>
    </location>
</feature>
<feature type="active site" description="Proton acceptor" evidence="1">
    <location>
        <position position="68"/>
    </location>
</feature>
<feature type="binding site" evidence="1">
    <location>
        <position position="64"/>
    </location>
    <ligand>
        <name>Zn(2+)</name>
        <dbReference type="ChEBI" id="CHEBI:29105"/>
        <label>1</label>
        <note>catalytic</note>
    </ligand>
</feature>
<feature type="binding site" evidence="1">
    <location>
        <position position="66"/>
    </location>
    <ligand>
        <name>Zn(2+)</name>
        <dbReference type="ChEBI" id="CHEBI:29105"/>
        <label>1</label>
        <note>catalytic</note>
    </ligand>
</feature>
<feature type="binding site" evidence="1">
    <location>
        <position position="68"/>
    </location>
    <ligand>
        <name>Zn(2+)</name>
        <dbReference type="ChEBI" id="CHEBI:29105"/>
        <label>2</label>
        <note>catalytic</note>
    </ligand>
</feature>
<feature type="binding site" evidence="1">
    <location>
        <position position="69"/>
    </location>
    <ligand>
        <name>Zn(2+)</name>
        <dbReference type="ChEBI" id="CHEBI:29105"/>
        <label>2</label>
        <note>catalytic</note>
    </ligand>
</feature>
<feature type="binding site" evidence="1">
    <location>
        <position position="141"/>
    </location>
    <ligand>
        <name>Zn(2+)</name>
        <dbReference type="ChEBI" id="CHEBI:29105"/>
        <label>1</label>
        <note>catalytic</note>
    </ligand>
</feature>
<feature type="binding site" evidence="1">
    <location>
        <position position="212"/>
    </location>
    <ligand>
        <name>Zn(2+)</name>
        <dbReference type="ChEBI" id="CHEBI:29105"/>
        <label>1</label>
        <note>catalytic</note>
    </ligand>
</feature>
<feature type="binding site" evidence="1">
    <location>
        <position position="212"/>
    </location>
    <ligand>
        <name>Zn(2+)</name>
        <dbReference type="ChEBI" id="CHEBI:29105"/>
        <label>2</label>
        <note>catalytic</note>
    </ligand>
</feature>
<feature type="binding site" evidence="1">
    <location>
        <position position="270"/>
    </location>
    <ligand>
        <name>Zn(2+)</name>
        <dbReference type="ChEBI" id="CHEBI:29105"/>
        <label>2</label>
        <note>catalytic</note>
    </ligand>
</feature>
<comment type="function">
    <text evidence="1">Zinc phosphodiesterase, which has both exoribonuclease and endoribonuclease activities.</text>
</comment>
<comment type="cofactor">
    <cofactor evidence="1">
        <name>Zn(2+)</name>
        <dbReference type="ChEBI" id="CHEBI:29105"/>
    </cofactor>
    <text evidence="1">Binds 2 Zn(2+) ions.</text>
</comment>
<comment type="subunit">
    <text evidence="1">Homodimer.</text>
</comment>
<comment type="similarity">
    <text evidence="1">Belongs to the RNase Z family. RNase BN subfamily.</text>
</comment>
<reference key="1">
    <citation type="journal article" date="2002" name="Proc. Natl. Acad. Sci. U.S.A.">
        <title>Extensive mosaic structure revealed by the complete genome sequence of uropathogenic Escherichia coli.</title>
        <authorList>
            <person name="Welch R.A."/>
            <person name="Burland V."/>
            <person name="Plunkett G. III"/>
            <person name="Redford P."/>
            <person name="Roesch P."/>
            <person name="Rasko D."/>
            <person name="Buckles E.L."/>
            <person name="Liou S.-R."/>
            <person name="Boutin A."/>
            <person name="Hackett J."/>
            <person name="Stroud D."/>
            <person name="Mayhew G.F."/>
            <person name="Rose D.J."/>
            <person name="Zhou S."/>
            <person name="Schwartz D.C."/>
            <person name="Perna N.T."/>
            <person name="Mobley H.L.T."/>
            <person name="Donnenberg M.S."/>
            <person name="Blattner F.R."/>
        </authorList>
    </citation>
    <scope>NUCLEOTIDE SEQUENCE [LARGE SCALE GENOMIC DNA]</scope>
    <source>
        <strain>CFT073 / ATCC 700928 / UPEC</strain>
    </source>
</reference>
<gene>
    <name evidence="1" type="primary">rbn</name>
    <name type="synonym">elaC</name>
    <name type="synonym">rnz</name>
    <name type="ordered locus">c2812</name>
</gene>
<dbReference type="EC" id="3.1.-.-" evidence="1"/>
<dbReference type="EMBL" id="AE014075">
    <property type="protein sequence ID" value="AAN81266.1"/>
    <property type="molecule type" value="Genomic_DNA"/>
</dbReference>
<dbReference type="RefSeq" id="WP_000420115.1">
    <property type="nucleotide sequence ID" value="NZ_CP051263.1"/>
</dbReference>
<dbReference type="SMR" id="Q8FFK8"/>
<dbReference type="STRING" id="199310.c2812"/>
<dbReference type="KEGG" id="ecc:c2812"/>
<dbReference type="eggNOG" id="COG1234">
    <property type="taxonomic scope" value="Bacteria"/>
</dbReference>
<dbReference type="HOGENOM" id="CLU_031317_2_0_6"/>
<dbReference type="BioCyc" id="ECOL199310:C2812-MONOMER"/>
<dbReference type="Proteomes" id="UP000001410">
    <property type="component" value="Chromosome"/>
</dbReference>
<dbReference type="GO" id="GO:0042781">
    <property type="term" value="F:3'-tRNA processing endoribonuclease activity"/>
    <property type="evidence" value="ECO:0007669"/>
    <property type="project" value="TreeGrafter"/>
</dbReference>
<dbReference type="GO" id="GO:0004527">
    <property type="term" value="F:exonuclease activity"/>
    <property type="evidence" value="ECO:0007669"/>
    <property type="project" value="UniProtKB-UniRule"/>
</dbReference>
<dbReference type="GO" id="GO:0008270">
    <property type="term" value="F:zinc ion binding"/>
    <property type="evidence" value="ECO:0007669"/>
    <property type="project" value="UniProtKB-UniRule"/>
</dbReference>
<dbReference type="CDD" id="cd07717">
    <property type="entry name" value="RNaseZ_ZiPD-like_MBL-fold"/>
    <property type="match status" value="1"/>
</dbReference>
<dbReference type="FunFam" id="3.60.15.10:FF:000002">
    <property type="entry name" value="Ribonuclease Z"/>
    <property type="match status" value="1"/>
</dbReference>
<dbReference type="Gene3D" id="3.60.15.10">
    <property type="entry name" value="Ribonuclease Z/Hydroxyacylglutathione hydrolase-like"/>
    <property type="match status" value="1"/>
</dbReference>
<dbReference type="HAMAP" id="MF_01818">
    <property type="entry name" value="RNase_Z_BN"/>
    <property type="match status" value="1"/>
</dbReference>
<dbReference type="InterPro" id="IPR001279">
    <property type="entry name" value="Metallo-B-lactamas"/>
</dbReference>
<dbReference type="InterPro" id="IPR036866">
    <property type="entry name" value="RibonucZ/Hydroxyglut_hydro"/>
</dbReference>
<dbReference type="InterPro" id="IPR013469">
    <property type="entry name" value="Rnase_BN"/>
</dbReference>
<dbReference type="InterPro" id="IPR013471">
    <property type="entry name" value="RNase_Z/BN"/>
</dbReference>
<dbReference type="NCBIfam" id="NF000800">
    <property type="entry name" value="PRK00055.1-1"/>
    <property type="match status" value="1"/>
</dbReference>
<dbReference type="NCBIfam" id="NF000801">
    <property type="entry name" value="PRK00055.1-3"/>
    <property type="match status" value="1"/>
</dbReference>
<dbReference type="NCBIfam" id="TIGR02651">
    <property type="entry name" value="RNase_Z"/>
    <property type="match status" value="1"/>
</dbReference>
<dbReference type="NCBIfam" id="TIGR02649">
    <property type="entry name" value="true_RNase_BN"/>
    <property type="match status" value="1"/>
</dbReference>
<dbReference type="PANTHER" id="PTHR46018">
    <property type="entry name" value="ZINC PHOSPHODIESTERASE ELAC PROTEIN 1"/>
    <property type="match status" value="1"/>
</dbReference>
<dbReference type="PANTHER" id="PTHR46018:SF2">
    <property type="entry name" value="ZINC PHOSPHODIESTERASE ELAC PROTEIN 1"/>
    <property type="match status" value="1"/>
</dbReference>
<dbReference type="Pfam" id="PF12706">
    <property type="entry name" value="Lactamase_B_2"/>
    <property type="match status" value="2"/>
</dbReference>
<dbReference type="SMART" id="SM00849">
    <property type="entry name" value="Lactamase_B"/>
    <property type="match status" value="1"/>
</dbReference>
<dbReference type="SUPFAM" id="SSF56281">
    <property type="entry name" value="Metallo-hydrolase/oxidoreductase"/>
    <property type="match status" value="1"/>
</dbReference>
<sequence length="305" mass="32964">MELIFLGTSAGVPTRTRNVTAILLNLQHPTQSGLWLFDCGEGTQHQLLHTAFNPGKLDKIFISHLHGDHLFGLPGLLCSRSMSGIIQPLTIYGPHGIREFVETALRISGSWTDYPLEIVEIGAGEIFDDGLRKVTAYPMEHPLECYGYRIEEHDKPGALNAQALKAAGVPPGPLFQELKAGKTIMLDDGRQINGADYLAVPVPGKALAIFGDTGPCDAALELAKGVDVMVHEATLDMAMEAKANSRGHSSTRQAAALAREAGVGKLIITHVSSRYDDKGCQHLLRECRSIFPATELANDFAVFSI</sequence>
<proteinExistence type="inferred from homology"/>
<keyword id="KW-0255">Endonuclease</keyword>
<keyword id="KW-0269">Exonuclease</keyword>
<keyword id="KW-0378">Hydrolase</keyword>
<keyword id="KW-0479">Metal-binding</keyword>
<keyword id="KW-0540">Nuclease</keyword>
<keyword id="KW-1185">Reference proteome</keyword>
<keyword id="KW-0819">tRNA processing</keyword>
<keyword id="KW-0862">Zinc</keyword>
<protein>
    <recommendedName>
        <fullName evidence="1">Ribonuclease BN</fullName>
        <shortName evidence="1">RNase BN</shortName>
        <ecNumber evidence="1">3.1.-.-</ecNumber>
    </recommendedName>
    <alternativeName>
        <fullName evidence="1">Ribonuclease Z homolog</fullName>
        <shortName evidence="1">RNase Z homolog</shortName>
    </alternativeName>
</protein>
<evidence type="ECO:0000255" key="1">
    <source>
        <dbReference type="HAMAP-Rule" id="MF_01818"/>
    </source>
</evidence>
<organism>
    <name type="scientific">Escherichia coli O6:H1 (strain CFT073 / ATCC 700928 / UPEC)</name>
    <dbReference type="NCBI Taxonomy" id="199310"/>
    <lineage>
        <taxon>Bacteria</taxon>
        <taxon>Pseudomonadati</taxon>
        <taxon>Pseudomonadota</taxon>
        <taxon>Gammaproteobacteria</taxon>
        <taxon>Enterobacterales</taxon>
        <taxon>Enterobacteriaceae</taxon>
        <taxon>Escherichia</taxon>
    </lineage>
</organism>
<accession>Q8FFK8</accession>